<organism>
    <name type="scientific">Homo sapiens</name>
    <name type="common">Human</name>
    <dbReference type="NCBI Taxonomy" id="9606"/>
    <lineage>
        <taxon>Eukaryota</taxon>
        <taxon>Metazoa</taxon>
        <taxon>Chordata</taxon>
        <taxon>Craniata</taxon>
        <taxon>Vertebrata</taxon>
        <taxon>Euteleostomi</taxon>
        <taxon>Mammalia</taxon>
        <taxon>Eutheria</taxon>
        <taxon>Euarchontoglires</taxon>
        <taxon>Primates</taxon>
        <taxon>Haplorrhini</taxon>
        <taxon>Catarrhini</taxon>
        <taxon>Hominidae</taxon>
        <taxon>Homo</taxon>
    </lineage>
</organism>
<sequence length="676" mass="72190">MDKYDDLGLEASKFIEDLNMYEASKDGLFRVDKGAGNNPEFEETRRVFATKMAKIHLQQQQQQLLQEETLPRGSRGPVNGGGRLGPQARWEVVGSKLTVDGAAKPPLAASTGAPGAVTTLAAGQPPYPPQEQRSRPYLHGTRHGSQDCGSRESLATSEMSAFHQPGPCEDPSCLTHGDYYDNLSLASPKWGDKPGVSPSIGLSVGSGWPSSPGSDPPLPKPCGDHPLNHRQLSLSSSRSSEGSLGGQNSGIGGRSSEKPTGLWSTASSQRVSPGLPSPNLENGAPAVGPVQPRTPSVSAPLALSCPRQGGLPRSNSGLGGEVSGVMSKPNVDPQPWFQDGPKSYLSSSAPSSSPAGLDGSQQGAVPGLGPKPGCTDLGTGPKLSPTSLVHPVMSTLPELSCKEGPLGWSSDGSLGSVLLDSPSSPRVRLPCQPLVPGPELRPSAAELKLEALTQRLEREMDAHPKADYFGACVKCSKGVFGAGQACQAMGNLYHDTCFTCAACSRKLRGKAFYFVNGKVFCEEDFLYSGFQQSADRCFLCGHLIMDMILQALGKSYHPGCFRCVICNECLDGVPFTVDSENKIYCVRDYHKVLAPKCAACGLPILPPEGSDETIRVVSMDRDYHVECYHCEDCGLELNDEDGHRCYPLEDHLFCHSCHVKRLEKRPSSTALHQHHF</sequence>
<dbReference type="EMBL" id="AJ132408">
    <property type="protein sequence ID" value="CAB63652.1"/>
    <property type="molecule type" value="mRNA"/>
</dbReference>
<dbReference type="EMBL" id="AJ312686">
    <property type="protein sequence ID" value="CAC35917.1"/>
    <property type="molecule type" value="Genomic_DNA"/>
</dbReference>
<dbReference type="EMBL" id="AJ297357">
    <property type="protein sequence ID" value="CAB95944.1"/>
    <property type="molecule type" value="Genomic_DNA"/>
</dbReference>
<dbReference type="EMBL" id="BC117236">
    <property type="protein sequence ID" value="AAI17237.1"/>
    <property type="molecule type" value="mRNA"/>
</dbReference>
<dbReference type="EMBL" id="BC117238">
    <property type="protein sequence ID" value="AAI17239.1"/>
    <property type="molecule type" value="mRNA"/>
</dbReference>
<dbReference type="CCDS" id="CCDS2729.1"/>
<dbReference type="RefSeq" id="NP_055055.1">
    <property type="nucleotide sequence ID" value="NM_014240.3"/>
</dbReference>
<dbReference type="BioGRID" id="114475">
    <property type="interactions" value="129"/>
</dbReference>
<dbReference type="CORUM" id="Q9UGP4"/>
<dbReference type="FunCoup" id="Q9UGP4">
    <property type="interactions" value="1095"/>
</dbReference>
<dbReference type="IntAct" id="Q9UGP4">
    <property type="interactions" value="70"/>
</dbReference>
<dbReference type="MINT" id="Q9UGP4"/>
<dbReference type="STRING" id="9606.ENSP00000273317"/>
<dbReference type="GlyCosmos" id="Q9UGP4">
    <property type="glycosylation" value="1 site, 1 glycan"/>
</dbReference>
<dbReference type="GlyGen" id="Q9UGP4">
    <property type="glycosylation" value="7 sites, 1 O-linked glycan (7 sites)"/>
</dbReference>
<dbReference type="iPTMnet" id="Q9UGP4"/>
<dbReference type="PhosphoSitePlus" id="Q9UGP4"/>
<dbReference type="SwissPalm" id="Q9UGP4"/>
<dbReference type="BioMuta" id="LIMD1"/>
<dbReference type="DMDM" id="47605932"/>
<dbReference type="jPOST" id="Q9UGP4"/>
<dbReference type="MassIVE" id="Q9UGP4"/>
<dbReference type="PaxDb" id="9606-ENSP00000273317"/>
<dbReference type="PeptideAtlas" id="Q9UGP4"/>
<dbReference type="ProteomicsDB" id="84252"/>
<dbReference type="Pumba" id="Q9UGP4"/>
<dbReference type="Antibodypedia" id="29569">
    <property type="antibodies" value="215 antibodies from 28 providers"/>
</dbReference>
<dbReference type="DNASU" id="8994"/>
<dbReference type="Ensembl" id="ENST00000273317.5">
    <property type="protein sequence ID" value="ENSP00000273317.4"/>
    <property type="gene ID" value="ENSG00000144791.10"/>
</dbReference>
<dbReference type="GeneID" id="8994"/>
<dbReference type="KEGG" id="hsa:8994"/>
<dbReference type="MANE-Select" id="ENST00000273317.5">
    <property type="protein sequence ID" value="ENSP00000273317.4"/>
    <property type="RefSeq nucleotide sequence ID" value="NM_014240.3"/>
    <property type="RefSeq protein sequence ID" value="NP_055055.1"/>
</dbReference>
<dbReference type="UCSC" id="uc003coq.4">
    <property type="organism name" value="human"/>
</dbReference>
<dbReference type="AGR" id="HGNC:6612"/>
<dbReference type="CTD" id="8994"/>
<dbReference type="DisGeNET" id="8994"/>
<dbReference type="GeneCards" id="LIMD1"/>
<dbReference type="HGNC" id="HGNC:6612">
    <property type="gene designation" value="LIMD1"/>
</dbReference>
<dbReference type="HPA" id="ENSG00000144791">
    <property type="expression patterns" value="Low tissue specificity"/>
</dbReference>
<dbReference type="MalaCards" id="LIMD1"/>
<dbReference type="MIM" id="604543">
    <property type="type" value="gene"/>
</dbReference>
<dbReference type="neXtProt" id="NX_Q9UGP4"/>
<dbReference type="OpenTargets" id="ENSG00000144791"/>
<dbReference type="PharmGKB" id="PA30385"/>
<dbReference type="VEuPathDB" id="HostDB:ENSG00000144791"/>
<dbReference type="eggNOG" id="KOG1701">
    <property type="taxonomic scope" value="Eukaryota"/>
</dbReference>
<dbReference type="GeneTree" id="ENSGT00940000159019"/>
<dbReference type="HOGENOM" id="CLU_001357_11_1_1"/>
<dbReference type="InParanoid" id="Q9UGP4"/>
<dbReference type="OMA" id="SCKEGPP"/>
<dbReference type="OrthoDB" id="25414at2759"/>
<dbReference type="PAN-GO" id="Q9UGP4">
    <property type="GO annotations" value="10 GO annotations based on evolutionary models"/>
</dbReference>
<dbReference type="PhylomeDB" id="Q9UGP4"/>
<dbReference type="TreeFam" id="TF320310"/>
<dbReference type="PathwayCommons" id="Q9UGP4"/>
<dbReference type="Reactome" id="R-HSA-1234176">
    <property type="pathway name" value="Oxygen-dependent proline hydroxylation of Hypoxia-inducible Factor Alpha"/>
</dbReference>
<dbReference type="SignaLink" id="Q9UGP4"/>
<dbReference type="BioGRID-ORCS" id="8994">
    <property type="hits" value="14 hits in 1169 CRISPR screens"/>
</dbReference>
<dbReference type="ChiTaRS" id="LIMD1">
    <property type="organism name" value="human"/>
</dbReference>
<dbReference type="GeneWiki" id="LIMD1"/>
<dbReference type="GenomeRNAi" id="8994"/>
<dbReference type="Pharos" id="Q9UGP4">
    <property type="development level" value="Tbio"/>
</dbReference>
<dbReference type="PRO" id="PR:Q9UGP4"/>
<dbReference type="Proteomes" id="UP000005640">
    <property type="component" value="Chromosome 3"/>
</dbReference>
<dbReference type="RNAct" id="Q9UGP4">
    <property type="molecule type" value="protein"/>
</dbReference>
<dbReference type="Bgee" id="ENSG00000144791">
    <property type="expression patterns" value="Expressed in lower lobe of lung and 187 other cell types or tissues"/>
</dbReference>
<dbReference type="ExpressionAtlas" id="Q9UGP4">
    <property type="expression patterns" value="baseline and differential"/>
</dbReference>
<dbReference type="GO" id="GO:0005912">
    <property type="term" value="C:adherens junction"/>
    <property type="evidence" value="ECO:0000314"/>
    <property type="project" value="UniProtKB"/>
</dbReference>
<dbReference type="GO" id="GO:0005737">
    <property type="term" value="C:cytoplasm"/>
    <property type="evidence" value="ECO:0000314"/>
    <property type="project" value="UniProtKB"/>
</dbReference>
<dbReference type="GO" id="GO:0005829">
    <property type="term" value="C:cytosol"/>
    <property type="evidence" value="ECO:0000304"/>
    <property type="project" value="Reactome"/>
</dbReference>
<dbReference type="GO" id="GO:0005925">
    <property type="term" value="C:focal adhesion"/>
    <property type="evidence" value="ECO:0000314"/>
    <property type="project" value="UniProtKB"/>
</dbReference>
<dbReference type="GO" id="GO:0005654">
    <property type="term" value="C:nucleoplasm"/>
    <property type="evidence" value="ECO:0000314"/>
    <property type="project" value="HPA"/>
</dbReference>
<dbReference type="GO" id="GO:0005634">
    <property type="term" value="C:nucleus"/>
    <property type="evidence" value="ECO:0000314"/>
    <property type="project" value="UniProtKB"/>
</dbReference>
<dbReference type="GO" id="GO:0000932">
    <property type="term" value="C:P-body"/>
    <property type="evidence" value="ECO:0000314"/>
    <property type="project" value="MGI"/>
</dbReference>
<dbReference type="GO" id="GO:0005886">
    <property type="term" value="C:plasma membrane"/>
    <property type="evidence" value="ECO:0000314"/>
    <property type="project" value="HPA"/>
</dbReference>
<dbReference type="GO" id="GO:0016442">
    <property type="term" value="C:RISC complex"/>
    <property type="evidence" value="ECO:0000314"/>
    <property type="project" value="MGI"/>
</dbReference>
<dbReference type="GO" id="GO:0005667">
    <property type="term" value="C:transcription regulator complex"/>
    <property type="evidence" value="ECO:0000318"/>
    <property type="project" value="GO_Central"/>
</dbReference>
<dbReference type="GO" id="GO:0046872">
    <property type="term" value="F:metal ion binding"/>
    <property type="evidence" value="ECO:0007669"/>
    <property type="project" value="UniProtKB-KW"/>
</dbReference>
<dbReference type="GO" id="GO:0003714">
    <property type="term" value="F:transcription corepressor activity"/>
    <property type="evidence" value="ECO:0000250"/>
    <property type="project" value="UniProtKB"/>
</dbReference>
<dbReference type="GO" id="GO:0016477">
    <property type="term" value="P:cell migration"/>
    <property type="evidence" value="ECO:0000315"/>
    <property type="project" value="UniProtKB"/>
</dbReference>
<dbReference type="GO" id="GO:0007010">
    <property type="term" value="P:cytoskeleton organization"/>
    <property type="evidence" value="ECO:0000315"/>
    <property type="project" value="UniProtKB"/>
</dbReference>
<dbReference type="GO" id="GO:0035278">
    <property type="term" value="P:miRNA-mediated gene silencing by inhibition of translation"/>
    <property type="evidence" value="ECO:0000315"/>
    <property type="project" value="UniProtKB"/>
</dbReference>
<dbReference type="GO" id="GO:0035195">
    <property type="term" value="P:miRNA-mediated post-transcriptional gene silencing"/>
    <property type="evidence" value="ECO:0000315"/>
    <property type="project" value="MGI"/>
</dbReference>
<dbReference type="GO" id="GO:0090090">
    <property type="term" value="P:negative regulation of canonical Wnt signaling pathway"/>
    <property type="evidence" value="ECO:0000250"/>
    <property type="project" value="UniProtKB"/>
</dbReference>
<dbReference type="GO" id="GO:0045892">
    <property type="term" value="P:negative regulation of DNA-templated transcription"/>
    <property type="evidence" value="ECO:0000314"/>
    <property type="project" value="UniProtKB"/>
</dbReference>
<dbReference type="GO" id="GO:0035331">
    <property type="term" value="P:negative regulation of hippo signaling"/>
    <property type="evidence" value="ECO:0000314"/>
    <property type="project" value="UniProtKB"/>
</dbReference>
<dbReference type="GO" id="GO:0045668">
    <property type="term" value="P:negative regulation of osteoblast differentiation"/>
    <property type="evidence" value="ECO:0000250"/>
    <property type="project" value="UniProtKB"/>
</dbReference>
<dbReference type="GO" id="GO:0002076">
    <property type="term" value="P:osteoblast development"/>
    <property type="evidence" value="ECO:0000250"/>
    <property type="project" value="UniProtKB"/>
</dbReference>
<dbReference type="GO" id="GO:0033962">
    <property type="term" value="P:P-body assembly"/>
    <property type="evidence" value="ECO:0000315"/>
    <property type="project" value="MGI"/>
</dbReference>
<dbReference type="GO" id="GO:0016310">
    <property type="term" value="P:phosphorylation"/>
    <property type="evidence" value="ECO:0000314"/>
    <property type="project" value="UniProtKB"/>
</dbReference>
<dbReference type="GO" id="GO:0008360">
    <property type="term" value="P:regulation of cell shape"/>
    <property type="evidence" value="ECO:0000315"/>
    <property type="project" value="UniProtKB"/>
</dbReference>
<dbReference type="GO" id="GO:0006355">
    <property type="term" value="P:regulation of DNA-templated transcription"/>
    <property type="evidence" value="ECO:0000318"/>
    <property type="project" value="GO_Central"/>
</dbReference>
<dbReference type="GO" id="GO:0001666">
    <property type="term" value="P:response to hypoxia"/>
    <property type="evidence" value="ECO:0000314"/>
    <property type="project" value="UniProtKB"/>
</dbReference>
<dbReference type="CDD" id="cd09352">
    <property type="entry name" value="LIM1_Ajuba_like"/>
    <property type="match status" value="1"/>
</dbReference>
<dbReference type="CDD" id="cd09355">
    <property type="entry name" value="LIM2_Ajuba_like"/>
    <property type="match status" value="1"/>
</dbReference>
<dbReference type="CDD" id="cd09438">
    <property type="entry name" value="LIM3_Ajuba_like"/>
    <property type="match status" value="1"/>
</dbReference>
<dbReference type="FunFam" id="2.10.110.10:FF:000028">
    <property type="entry name" value="LIM domain-containing protein 1"/>
    <property type="match status" value="1"/>
</dbReference>
<dbReference type="FunFam" id="2.10.110.10:FF:000036">
    <property type="entry name" value="LIM domain-containing protein 1"/>
    <property type="match status" value="1"/>
</dbReference>
<dbReference type="FunFam" id="2.10.110.10:FF:000037">
    <property type="entry name" value="LIM domain-containing protein 1"/>
    <property type="match status" value="1"/>
</dbReference>
<dbReference type="Gene3D" id="2.10.110.10">
    <property type="entry name" value="Cysteine Rich Protein"/>
    <property type="match status" value="3"/>
</dbReference>
<dbReference type="InterPro" id="IPR047172">
    <property type="entry name" value="Ajuba-like"/>
</dbReference>
<dbReference type="InterPro" id="IPR047245">
    <property type="entry name" value="Ajuba-like_LIM1"/>
</dbReference>
<dbReference type="InterPro" id="IPR047247">
    <property type="entry name" value="Ajuba-like_LIM2"/>
</dbReference>
<dbReference type="InterPro" id="IPR047248">
    <property type="entry name" value="Ajuba-like_LIM3"/>
</dbReference>
<dbReference type="InterPro" id="IPR001781">
    <property type="entry name" value="Znf_LIM"/>
</dbReference>
<dbReference type="PANTHER" id="PTHR24219:SF3">
    <property type="entry name" value="LIM DOMAIN-CONTAINING PROTEIN 1"/>
    <property type="match status" value="1"/>
</dbReference>
<dbReference type="PANTHER" id="PTHR24219">
    <property type="entry name" value="LIM DOMAIN-CONTAINING PROTEIN JUB"/>
    <property type="match status" value="1"/>
</dbReference>
<dbReference type="Pfam" id="PF00412">
    <property type="entry name" value="LIM"/>
    <property type="match status" value="3"/>
</dbReference>
<dbReference type="SMART" id="SM00132">
    <property type="entry name" value="LIM"/>
    <property type="match status" value="3"/>
</dbReference>
<dbReference type="SUPFAM" id="SSF57716">
    <property type="entry name" value="Glucocorticoid receptor-like (DNA-binding domain)"/>
    <property type="match status" value="2"/>
</dbReference>
<dbReference type="PROSITE" id="PS00478">
    <property type="entry name" value="LIM_DOMAIN_1"/>
    <property type="match status" value="2"/>
</dbReference>
<dbReference type="PROSITE" id="PS50023">
    <property type="entry name" value="LIM_DOMAIN_2"/>
    <property type="match status" value="3"/>
</dbReference>
<protein>
    <recommendedName>
        <fullName>LIM domain-containing protein 1</fullName>
    </recommendedName>
</protein>
<name>LIMD1_HUMAN</name>
<keyword id="KW-0965">Cell junction</keyword>
<keyword id="KW-0963">Cytoplasm</keyword>
<keyword id="KW-0440">LIM domain</keyword>
<keyword id="KW-0479">Metal-binding</keyword>
<keyword id="KW-0539">Nucleus</keyword>
<keyword id="KW-0597">Phosphoprotein</keyword>
<keyword id="KW-1267">Proteomics identification</keyword>
<keyword id="KW-1185">Reference proteome</keyword>
<keyword id="KW-0677">Repeat</keyword>
<keyword id="KW-0678">Repressor</keyword>
<keyword id="KW-0943">RNA-mediated gene silencing</keyword>
<keyword id="KW-0804">Transcription</keyword>
<keyword id="KW-0805">Transcription regulation</keyword>
<keyword id="KW-0043">Tumor suppressor</keyword>
<keyword id="KW-0862">Zinc</keyword>
<reference key="1">
    <citation type="journal article" date="1999" name="Hum. Genet.">
        <title>A novel gene containing LIM domains (LIMD1) is located within the common eliminated region 1 (C3CER1) in 3p21.3.</title>
        <authorList>
            <person name="Kiss H."/>
            <person name="Kedra D."/>
            <person name="Yang Y."/>
            <person name="Kost-Alimova M."/>
            <person name="Kiss C."/>
            <person name="O'Brien K.P."/>
            <person name="Fransson I."/>
            <person name="Klein G."/>
            <person name="Imreh S."/>
            <person name="Dumanski J.P."/>
        </authorList>
    </citation>
    <scope>NUCLEOTIDE SEQUENCE [MRNA]</scope>
    <scope>TISSUE SPECIFICITY</scope>
</reference>
<reference key="2">
    <citation type="journal article" date="2001" name="Genomics">
        <title>The LZTFL1 gene is a part of a transcriptional map covering 250 kb within the common eliminated region 1 (C3CER1) in 3p21.3.</title>
        <authorList>
            <person name="Kiss H."/>
            <person name="Kedra D."/>
            <person name="Kiss C."/>
            <person name="Kost-Alimova M."/>
            <person name="Yang Y."/>
            <person name="Klein G."/>
            <person name="Imreh S."/>
            <person name="Dumanski J.P."/>
        </authorList>
    </citation>
    <scope>NUCLEOTIDE SEQUENCE [GENOMIC DNA]</scope>
</reference>
<reference key="3">
    <citation type="journal article" date="2004" name="Genome Res.">
        <title>The status, quality, and expansion of the NIH full-length cDNA project: the Mammalian Gene Collection (MGC).</title>
        <authorList>
            <consortium name="The MGC Project Team"/>
        </authorList>
    </citation>
    <scope>NUCLEOTIDE SEQUENCE [LARGE SCALE MRNA]</scope>
    <source>
        <tissue>Brain</tissue>
    </source>
</reference>
<reference key="4">
    <citation type="journal article" date="2004" name="Anal. Chem.">
        <title>Robust phosphoproteomic profiling of tyrosine phosphorylation sites from human T cells using immobilized metal affinity chromatography and tandem mass spectrometry.</title>
        <authorList>
            <person name="Brill L.M."/>
            <person name="Salomon A.R."/>
            <person name="Ficarro S.B."/>
            <person name="Mukherji M."/>
            <person name="Stettler-Gill M."/>
            <person name="Peters E.C."/>
        </authorList>
    </citation>
    <scope>PHOSPHORYLATION [LARGE SCALE ANALYSIS] AT SER-272 AND SER-277</scope>
    <scope>IDENTIFICATION BY MASS SPECTROMETRY [LARGE SCALE ANALYSIS]</scope>
    <source>
        <tissue>Leukemic T-cell</tissue>
    </source>
</reference>
<reference key="5">
    <citation type="journal article" date="2004" name="Proc. Natl. Acad. Sci. U.S.A.">
        <title>LIM domains-containing protein 1 (LIMD1), a tumor suppressor encoded at chromosome 3p21.3, binds pRB and represses E2F-driven transcription.</title>
        <authorList>
            <person name="Sharp T.V."/>
            <person name="Munoz F."/>
            <person name="Bourboulia D."/>
            <person name="Presneau N."/>
            <person name="Darai E."/>
            <person name="Wang H.-W."/>
            <person name="Cannon M."/>
            <person name="Butcher D.N."/>
            <person name="Nicholson A.G."/>
            <person name="Klein G."/>
            <person name="Imreh S."/>
            <person name="Boshoff C."/>
        </authorList>
    </citation>
    <scope>FUNCTION</scope>
    <scope>INTERACTION WITH RB1</scope>
    <scope>SUBCELLULAR LOCATION</scope>
    <scope>INDUCTION</scope>
</reference>
<reference key="6">
    <citation type="journal article" date="2005" name="Mol. Cell. Biol.">
        <title>The LIM protein Ajuba influences interleukin-1-induced NF-kappaB activation by affecting the assembly and activity of the protein kinase Czeta/p62/TRAF6 signaling complex.</title>
        <authorList>
            <person name="Feng Y."/>
            <person name="Longmore G.D."/>
        </authorList>
    </citation>
    <scope>INTERACTION WITH SQSTM1</scope>
</reference>
<reference key="7">
    <citation type="journal article" date="2008" name="Cancer Lett.">
        <title>Cell cycle regulated phosphorylation of LIMD1 in cell lines and expression in human breast cancers.</title>
        <authorList>
            <person name="Huggins C.J."/>
            <person name="Andrulis I.L."/>
        </authorList>
    </citation>
    <scope>SUBCELLULAR LOCATION</scope>
    <scope>PHOSPHORYLATION</scope>
</reference>
<reference key="8">
    <citation type="journal article" date="2008" name="Dev. Cell">
        <title>Ajuba LIM proteins are snail/slug corepressors required for neural crest development in Xenopus.</title>
        <authorList>
            <person name="Langer E.M."/>
            <person name="Feng Y."/>
            <person name="Zhaoyuan H."/>
            <person name="Rauscher F.J. III"/>
            <person name="Kroll K.L."/>
            <person name="Longmore G.D."/>
        </authorList>
    </citation>
    <scope>INTERACTION WITH SNAI1</scope>
</reference>
<reference key="9">
    <citation type="journal article" date="2008" name="Int. J. Cancer">
        <title>Differential subcellular localisation of the tumour suppressor protein LIMD1 in breast cancer correlates with patient survival.</title>
        <authorList>
            <person name="Spendlove I."/>
            <person name="Al-Attar A."/>
            <person name="Watherstone O."/>
            <person name="Webb T.M."/>
            <person name="Ellis I.O."/>
            <person name="Longmore G.D."/>
            <person name="Sharp T.V."/>
        </authorList>
    </citation>
    <scope>SUBCELLULAR LOCATION</scope>
    <scope>TISSUE SPECIFICITY</scope>
</reference>
<reference key="10">
    <citation type="journal article" date="2008" name="Proc. Natl. Acad. Sci. U.S.A.">
        <title>A quantitative atlas of mitotic phosphorylation.</title>
        <authorList>
            <person name="Dephoure N."/>
            <person name="Zhou C."/>
            <person name="Villen J."/>
            <person name="Beausoleil S.A."/>
            <person name="Bakalarski C.E."/>
            <person name="Elledge S.J."/>
            <person name="Gygi S.P."/>
        </authorList>
    </citation>
    <scope>PHOSPHORYLATION [LARGE SCALE ANALYSIS] AT SER-304; SER-421 AND SER-424</scope>
    <scope>IDENTIFICATION BY MASS SPECTROMETRY [LARGE SCALE ANALYSIS]</scope>
    <source>
        <tissue>Cervix carcinoma</tissue>
    </source>
</reference>
<reference key="11">
    <citation type="journal article" date="2009" name="Anal. Chem.">
        <title>Lys-N and trypsin cover complementary parts of the phosphoproteome in a refined SCX-based approach.</title>
        <authorList>
            <person name="Gauci S."/>
            <person name="Helbig A.O."/>
            <person name="Slijper M."/>
            <person name="Krijgsveld J."/>
            <person name="Heck A.J."/>
            <person name="Mohammed S."/>
        </authorList>
    </citation>
    <scope>IDENTIFICATION BY MASS SPECTROMETRY [LARGE SCALE ANALYSIS]</scope>
</reference>
<reference key="12">
    <citation type="journal article" date="2009" name="Sci. Signal.">
        <title>Quantitative phosphoproteomic analysis of T cell receptor signaling reveals system-wide modulation of protein-protein interactions.</title>
        <authorList>
            <person name="Mayya V."/>
            <person name="Lundgren D.H."/>
            <person name="Hwang S.-I."/>
            <person name="Rezaul K."/>
            <person name="Wu L."/>
            <person name="Eng J.K."/>
            <person name="Rodionov V."/>
            <person name="Han D.K."/>
        </authorList>
    </citation>
    <scope>PHOSPHORYLATION [LARGE SCALE ANALYSIS] AT SER-424</scope>
    <scope>IDENTIFICATION BY MASS SPECTROMETRY [LARGE SCALE ANALYSIS]</scope>
    <source>
        <tissue>Leukemic T-cell</tissue>
    </source>
</reference>
<reference key="13">
    <citation type="journal article" date="2010" name="Curr. Biol.">
        <title>Ajuba LIM proteins are negative regulators of the Hippo signaling pathway.</title>
        <authorList>
            <person name="Das Thakur M."/>
            <person name="Feng Y."/>
            <person name="Jagannathan R."/>
            <person name="Seppa M.J."/>
            <person name="Skeath J.B."/>
            <person name="Longmore G.D."/>
        </authorList>
    </citation>
    <scope>FUNCTION</scope>
    <scope>SUBCELLULAR LOCATION</scope>
    <scope>INTERACTION WITH LATS1 AND LATS2</scope>
</reference>
<reference key="14">
    <citation type="journal article" date="2010" name="Proc. Natl. Acad. Sci. U.S.A.">
        <title>LIM-domain proteins, LIMD1, Ajuba, and WTIP are required for microRNA-mediated gene silencing.</title>
        <authorList>
            <person name="James V."/>
            <person name="Zhang Y."/>
            <person name="Foxler D.E."/>
            <person name="de Moor C.H."/>
            <person name="Kong Y.W."/>
            <person name="Webb T.M."/>
            <person name="Self T.J."/>
            <person name="Feng Y."/>
            <person name="Lagos D."/>
            <person name="Chu C.Y."/>
            <person name="Rana T.M."/>
            <person name="Morley S.J."/>
            <person name="Longmore G.D."/>
            <person name="Bushell M."/>
            <person name="Sharp T.V."/>
        </authorList>
    </citation>
    <scope>FUNCTION</scope>
    <scope>SUBCELLULAR LOCATION</scope>
    <scope>INTERACTION WITH EIF4E; AGO1; AGO2; DCP2 AND DDX6</scope>
</reference>
<reference key="15">
    <citation type="journal article" date="2010" name="Sci. Signal.">
        <title>Quantitative phosphoproteomics reveals widespread full phosphorylation site occupancy during mitosis.</title>
        <authorList>
            <person name="Olsen J.V."/>
            <person name="Vermeulen M."/>
            <person name="Santamaria A."/>
            <person name="Kumar C."/>
            <person name="Miller M.L."/>
            <person name="Jensen L.J."/>
            <person name="Gnad F."/>
            <person name="Cox J."/>
            <person name="Jensen T.S."/>
            <person name="Nigg E.A."/>
            <person name="Brunak S."/>
            <person name="Mann M."/>
        </authorList>
    </citation>
    <scope>PHOSPHORYLATION [LARGE SCALE ANALYSIS] AT SER-272; SER-277 AND SER-421</scope>
    <scope>IDENTIFICATION BY MASS SPECTROMETRY [LARGE SCALE ANALYSIS]</scope>
    <source>
        <tissue>Cervix carcinoma</tissue>
    </source>
</reference>
<reference key="16">
    <citation type="journal article" date="2011" name="BMC Biol.">
        <title>Identification and characterization of a set of conserved and new regulators of cytoskeletal organisation, cell morphology and migration.</title>
        <authorList>
            <person name="Bai S.W."/>
            <person name="Herrera-Abreu M.T."/>
            <person name="Rohn J.L."/>
            <person name="Racine V."/>
            <person name="Tajadura V."/>
            <person name="Suryavanshi N."/>
            <person name="Bechtel S."/>
            <person name="Wiemann S."/>
            <person name="Baum B."/>
            <person name="Ridley A.J."/>
        </authorList>
    </citation>
    <scope>FUNCTION</scope>
</reference>
<reference key="17">
    <citation type="journal article" date="2011" name="BMC Syst. Biol.">
        <title>Initial characterization of the human central proteome.</title>
        <authorList>
            <person name="Burkard T.R."/>
            <person name="Planyavsky M."/>
            <person name="Kaupe I."/>
            <person name="Breitwieser F.P."/>
            <person name="Buerckstuemmer T."/>
            <person name="Bennett K.L."/>
            <person name="Superti-Furga G."/>
            <person name="Colinge J."/>
        </authorList>
    </citation>
    <scope>IDENTIFICATION BY MASS SPECTROMETRY [LARGE SCALE ANALYSIS]</scope>
</reference>
<reference key="18">
    <citation type="journal article" date="2011" name="Sci. Signal.">
        <title>System-wide temporal characterization of the proteome and phosphoproteome of human embryonic stem cell differentiation.</title>
        <authorList>
            <person name="Rigbolt K.T."/>
            <person name="Prokhorova T.A."/>
            <person name="Akimov V."/>
            <person name="Henningsen J."/>
            <person name="Johansen P.T."/>
            <person name="Kratchmarova I."/>
            <person name="Kassem M."/>
            <person name="Mann M."/>
            <person name="Olsen J.V."/>
            <person name="Blagoev B."/>
        </authorList>
    </citation>
    <scope>IDENTIFICATION BY MASS SPECTROMETRY [LARGE SCALE ANALYSIS]</scope>
</reference>
<reference key="19">
    <citation type="journal article" date="2012" name="Nat. Cell Biol.">
        <title>The LIMD1 protein bridges an association between the prolyl hydroxylases and VHL to repress HIF-1 activity.</title>
        <authorList>
            <person name="Foxler D.E."/>
            <person name="Bridge K.S."/>
            <person name="James V."/>
            <person name="Webb T.M."/>
            <person name="Mee M."/>
            <person name="Wong S.C."/>
            <person name="Feng Y."/>
            <person name="Constantin-Teodosiu D."/>
            <person name="Petursdottir T.E."/>
            <person name="Bjornsson J."/>
            <person name="Ingvarsson S."/>
            <person name="Ratcliffe P.J."/>
            <person name="Longmore G.D."/>
            <person name="Sharp T.V."/>
        </authorList>
    </citation>
    <scope>FUNCTION</scope>
    <scope>INTERACTION WITH EGLN1/PHD2; EGLN2/PHD1; EGLN3/PHD3 AND VHL</scope>
    <scope>IDENTIFICATION IN A COMPLEX WITH CUL2; EGLN1/PHD2; VHL AND ELOB</scope>
</reference>
<reference key="20">
    <citation type="journal article" date="2013" name="J. Proteome Res.">
        <title>Toward a comprehensive characterization of a human cancer cell phosphoproteome.</title>
        <authorList>
            <person name="Zhou H."/>
            <person name="Di Palma S."/>
            <person name="Preisinger C."/>
            <person name="Peng M."/>
            <person name="Polat A.N."/>
            <person name="Heck A.J."/>
            <person name="Mohammed S."/>
        </authorList>
    </citation>
    <scope>PHOSPHORYLATION [LARGE SCALE ANALYSIS] AT SER-272 AND SER-277</scope>
    <scope>IDENTIFICATION BY MASS SPECTROMETRY [LARGE SCALE ANALYSIS]</scope>
    <source>
        <tissue>Cervix carcinoma</tissue>
        <tissue>Erythroleukemia</tissue>
    </source>
</reference>
<reference key="21">
    <citation type="journal article" date="2014" name="J. Proteomics">
        <title>An enzyme assisted RP-RPLC approach for in-depth analysis of human liver phosphoproteome.</title>
        <authorList>
            <person name="Bian Y."/>
            <person name="Song C."/>
            <person name="Cheng K."/>
            <person name="Dong M."/>
            <person name="Wang F."/>
            <person name="Huang J."/>
            <person name="Sun D."/>
            <person name="Wang L."/>
            <person name="Ye M."/>
            <person name="Zou H."/>
        </authorList>
    </citation>
    <scope>PHOSPHORYLATION [LARGE SCALE ANALYSIS] AT SER-145 AND SER-233</scope>
    <scope>IDENTIFICATION BY MASS SPECTROMETRY [LARGE SCALE ANALYSIS]</scope>
    <source>
        <tissue>Liver</tissue>
    </source>
</reference>
<evidence type="ECO:0000250" key="1"/>
<evidence type="ECO:0000250" key="2">
    <source>
        <dbReference type="UniProtKB" id="B5DEH0"/>
    </source>
</evidence>
<evidence type="ECO:0000255" key="3">
    <source>
        <dbReference type="PROSITE-ProRule" id="PRU00125"/>
    </source>
</evidence>
<evidence type="ECO:0000256" key="4">
    <source>
        <dbReference type="SAM" id="MobiDB-lite"/>
    </source>
</evidence>
<evidence type="ECO:0000269" key="5">
    <source>
    </source>
</evidence>
<evidence type="ECO:0000269" key="6">
    <source>
    </source>
</evidence>
<evidence type="ECO:0000269" key="7">
    <source>
    </source>
</evidence>
<evidence type="ECO:0000269" key="8">
    <source>
    </source>
</evidence>
<evidence type="ECO:0000269" key="9">
    <source>
    </source>
</evidence>
<evidence type="ECO:0000269" key="10">
    <source>
    </source>
</evidence>
<evidence type="ECO:0000269" key="11">
    <source>
    </source>
</evidence>
<evidence type="ECO:0000269" key="12">
    <source>
    </source>
</evidence>
<evidence type="ECO:0000269" key="13">
    <source>
    </source>
</evidence>
<evidence type="ECO:0000269" key="14">
    <source>
    </source>
</evidence>
<evidence type="ECO:0000305" key="15"/>
<evidence type="ECO:0007744" key="16">
    <source>
    </source>
</evidence>
<evidence type="ECO:0007744" key="17">
    <source>
    </source>
</evidence>
<evidence type="ECO:0007744" key="18">
    <source>
    </source>
</evidence>
<evidence type="ECO:0007744" key="19">
    <source>
    </source>
</evidence>
<evidence type="ECO:0007744" key="20">
    <source>
    </source>
</evidence>
<evidence type="ECO:0007744" key="21">
    <source>
    </source>
</evidence>
<feature type="chain" id="PRO_0000075801" description="LIM domain-containing protein 1">
    <location>
        <begin position="1"/>
        <end position="676"/>
    </location>
</feature>
<feature type="domain" description="LIM zinc-binding 1" evidence="3">
    <location>
        <begin position="470"/>
        <end position="531"/>
    </location>
</feature>
<feature type="domain" description="LIM zinc-binding 2" evidence="3">
    <location>
        <begin position="535"/>
        <end position="595"/>
    </location>
</feature>
<feature type="domain" description="LIM zinc-binding 3" evidence="3">
    <location>
        <begin position="595"/>
        <end position="664"/>
    </location>
</feature>
<feature type="region of interest" description="Mediates nuclear export">
    <location>
        <begin position="54"/>
        <end position="134"/>
    </location>
</feature>
<feature type="region of interest" description="Disordered" evidence="4">
    <location>
        <begin position="104"/>
        <end position="163"/>
    </location>
</feature>
<feature type="region of interest" description="Interaction with EGLN1/PHD2">
    <location>
        <begin position="186"/>
        <end position="260"/>
    </location>
</feature>
<feature type="region of interest" description="Disordered" evidence="4">
    <location>
        <begin position="189"/>
        <end position="389"/>
    </location>
</feature>
<feature type="region of interest" description="Interaction with RB1" evidence="6">
    <location>
        <begin position="404"/>
        <end position="442"/>
    </location>
</feature>
<feature type="region of interest" description="Necessary for nuclear localization">
    <location>
        <begin position="472"/>
        <end position="676"/>
    </location>
</feature>
<feature type="compositionally biased region" description="Low complexity" evidence="4">
    <location>
        <begin position="201"/>
        <end position="213"/>
    </location>
</feature>
<feature type="compositionally biased region" description="Low complexity" evidence="4">
    <location>
        <begin position="232"/>
        <end position="242"/>
    </location>
</feature>
<feature type="compositionally biased region" description="Gly residues" evidence="4">
    <location>
        <begin position="243"/>
        <end position="253"/>
    </location>
</feature>
<feature type="compositionally biased region" description="Polar residues" evidence="4">
    <location>
        <begin position="262"/>
        <end position="271"/>
    </location>
</feature>
<feature type="compositionally biased region" description="Low complexity" evidence="4">
    <location>
        <begin position="343"/>
        <end position="360"/>
    </location>
</feature>
<feature type="modified residue" description="Phosphoserine" evidence="21">
    <location>
        <position position="145"/>
    </location>
</feature>
<feature type="modified residue" description="Phosphoserine" evidence="21">
    <location>
        <position position="233"/>
    </location>
</feature>
<feature type="modified residue" description="Phosphoserine" evidence="2">
    <location>
        <position position="239"/>
    </location>
</feature>
<feature type="modified residue" description="Phosphoserine" evidence="16 19 20">
    <location>
        <position position="272"/>
    </location>
</feature>
<feature type="modified residue" description="Phosphoserine" evidence="16 19 20">
    <location>
        <position position="277"/>
    </location>
</feature>
<feature type="modified residue" description="Phosphoserine" evidence="17">
    <location>
        <position position="304"/>
    </location>
</feature>
<feature type="modified residue" description="Phosphoserine" evidence="2">
    <location>
        <position position="316"/>
    </location>
</feature>
<feature type="modified residue" description="Phosphoserine" evidence="17 19">
    <location>
        <position position="421"/>
    </location>
</feature>
<feature type="modified residue" description="Phosphoserine" evidence="17 18">
    <location>
        <position position="424"/>
    </location>
</feature>
<feature type="sequence variant" id="VAR_050147" description="In dbSNP:rs2578662.">
    <original>G</original>
    <variation>D</variation>
    <location>
        <position position="36"/>
    </location>
</feature>
<feature type="sequence variant" id="VAR_021993" description="In dbSNP:rs3733113.">
    <original>G</original>
    <variation>R</variation>
    <location>
        <position position="415"/>
    </location>
</feature>
<comment type="function">
    <text evidence="6 11 12 13 14">Adapter or scaffold protein which participates in the assembly of numerous protein complexes and is involved in several cellular processes such as cell fate determination, cytoskeletal organization, repression of gene transcription, cell-cell adhesion, cell differentiation, proliferation and migration. Positively regulates microRNA (miRNA)-mediated gene silencing and is essential for P-body formation and integrity. Acts as a hypoxic regulator by bridging an association between the prolyl hydroxylases and VHL enabling efficient degradation of HIF1A. Acts as a transcriptional corepressor for SNAI1- and SNAI2/SLUG-dependent repression of E-cadherin transcription. Negatively regulates the Hippo signaling pathway and antagonizes phosphorylation of YAP1. Inhibits E2F-mediated transcription, and suppresses the expression of the majority of genes with E2F1-responsive elements. Regulates osteoblast development, function, differentiation and stress osteoclastogenesis. Enhances the ability of TRAF6 to activate adapter protein complex 1 (AP-1) and negatively regulates the canonical Wnt receptor signaling pathway in osteoblasts. May act as a tumor suppressor by inhibiting cell proliferation.</text>
</comment>
<comment type="subunit">
    <text evidence="1 6 7 8 11 12 14">Interacts (via LIM domains) with TRAF6. Found in a complex with TRAF6, PRKCZ and SQSTM1. Interacts (via LIM domains) SNAI2/SLUG (via SNAG domain) and SCRT1 (via SNAG domain) (By similarity). Interacts with SQSTM1 and RB1. Found in a complex composed of LIMD1, VHL, EGLN1/PHD2, ELOB and CUL2. Interacts with EIF4E, AGO1, AGO2, DCP2, DDX6, LATS1, LATS2, EGLN1/PHD2, EGLN2/PHD1 and EGLN3/PHD3. Interacts (via LIM zinc-binding 2) with isoform 1 and isoform 3 of VHL. Interacts (via LIM domains) with SNAI1 (via SNAG domain).</text>
</comment>
<comment type="interaction">
    <interactant intactId="EBI-2652871">
        <id>Q9UGP4</id>
    </interactant>
    <interactant intactId="EBI-527363">
        <id>Q9UL18</id>
        <label>AGO1</label>
    </interactant>
    <organismsDiffer>false</organismsDiffer>
    <experiments>3</experiments>
</comment>
<comment type="interaction">
    <interactant intactId="EBI-2652871">
        <id>Q9UGP4</id>
    </interactant>
    <interactant intactId="EBI-528269">
        <id>Q9UKV8</id>
        <label>AGO2</label>
    </interactant>
    <organismsDiffer>false</organismsDiffer>
    <experiments>11</experiments>
</comment>
<comment type="interaction">
    <interactant intactId="EBI-2652871">
        <id>Q9UGP4</id>
    </interactant>
    <interactant intactId="EBI-1037845">
        <id>Q13439</id>
        <label>GOLGA4</label>
    </interactant>
    <organismsDiffer>false</organismsDiffer>
    <experiments>2</experiments>
</comment>
<comment type="interaction">
    <interactant intactId="EBI-2652871">
        <id>Q9UGP4</id>
    </interactant>
    <interactant intactId="EBI-6248094">
        <id>Q9Q2G4</id>
        <label>ORF</label>
    </interactant>
    <organismsDiffer>true</organismsDiffer>
    <experiments>5</experiments>
</comment>
<comment type="subcellular location">
    <subcellularLocation>
        <location>Cytoplasm</location>
    </subcellularLocation>
    <subcellularLocation>
        <location>Nucleus</location>
    </subcellularLocation>
    <subcellularLocation>
        <location>Cytoplasm</location>
        <location>P-body</location>
    </subcellularLocation>
    <subcellularLocation>
        <location>Cell junction</location>
        <location>Adherens junction</location>
    </subcellularLocation>
    <subcellularLocation>
        <location>Cell junction</location>
        <location>Focal adhesion</location>
    </subcellularLocation>
    <text>Shuttles between cytoplasm and nucleus but is localized predominantly to the cytoplasm. Found in the nucleus but not nucleoli. Colocalizes with VCL in the focal adhesions. Down-regulation and/or elimination of its expression from the nucleus of neoplastic cells correlates strongly with poor patient prognosis and aggressive forms of breast carcinoma. Conversely, strong nuclear localization correlates with low-tumor grade and better patient prognosis.</text>
</comment>
<comment type="tissue specificity">
    <text evidence="5 10">Expressed in normal and breast cancer tissues (at protein level). Ubiquitous.</text>
</comment>
<comment type="induction">
    <text evidence="6">Down-regulated in lung cancer.</text>
</comment>
<comment type="PTM">
    <text evidence="9">Phosphorylated during mitosis.</text>
</comment>
<comment type="similarity">
    <text evidence="15">Belongs to the zyxin/ajuba family.</text>
</comment>
<comment type="online information" name="Atlas of Genetics and Cytogenetics in Oncology and Haematology">
    <link uri="https://atlasgeneticsoncology.org/gene/41158/LIMD1"/>
</comment>
<gene>
    <name type="primary">LIMD1</name>
</gene>
<proteinExistence type="evidence at protein level"/>
<accession>Q9UGP4</accession>
<accession>Q17RQ1</accession>
<accession>Q9BQQ9</accession>
<accession>Q9NQ47</accession>